<evidence type="ECO:0000255" key="1">
    <source>
        <dbReference type="HAMAP-Rule" id="MF_01565"/>
    </source>
</evidence>
<reference key="1">
    <citation type="journal article" date="2010" name="PLoS ONE">
        <title>Genome sequence of Cronobacter sakazakii BAA-894 and comparative genomic hybridization analysis with other Cronobacter species.</title>
        <authorList>
            <person name="Kucerova E."/>
            <person name="Clifton S.W."/>
            <person name="Xia X.Q."/>
            <person name="Long F."/>
            <person name="Porwollik S."/>
            <person name="Fulton L."/>
            <person name="Fronick C."/>
            <person name="Minx P."/>
            <person name="Kyung K."/>
            <person name="Warren W."/>
            <person name="Fulton R."/>
            <person name="Feng D."/>
            <person name="Wollam A."/>
            <person name="Shah N."/>
            <person name="Bhonagiri V."/>
            <person name="Nash W.E."/>
            <person name="Hallsworth-Pepin K."/>
            <person name="Wilson R.K."/>
            <person name="McClelland M."/>
            <person name="Forsythe S.J."/>
        </authorList>
    </citation>
    <scope>NUCLEOTIDE SEQUENCE [LARGE SCALE GENOMIC DNA]</scope>
    <source>
        <strain>ATCC BAA-894</strain>
    </source>
</reference>
<proteinExistence type="inferred from homology"/>
<gene>
    <name evidence="1" type="primary">zntB</name>
    <name type="ordered locus">ESA_01672</name>
</gene>
<dbReference type="EMBL" id="CP000783">
    <property type="protein sequence ID" value="ABU76926.1"/>
    <property type="molecule type" value="Genomic_DNA"/>
</dbReference>
<dbReference type="RefSeq" id="WP_004387321.1">
    <property type="nucleotide sequence ID" value="NC_009778.1"/>
</dbReference>
<dbReference type="SMR" id="A7MLI3"/>
<dbReference type="GeneID" id="56730494"/>
<dbReference type="KEGG" id="esa:ESA_01672"/>
<dbReference type="HOGENOM" id="CLU_007127_2_0_6"/>
<dbReference type="Proteomes" id="UP000000260">
    <property type="component" value="Chromosome"/>
</dbReference>
<dbReference type="GO" id="GO:0005886">
    <property type="term" value="C:plasma membrane"/>
    <property type="evidence" value="ECO:0007669"/>
    <property type="project" value="UniProtKB-SubCell"/>
</dbReference>
<dbReference type="GO" id="GO:0050897">
    <property type="term" value="F:cobalt ion binding"/>
    <property type="evidence" value="ECO:0007669"/>
    <property type="project" value="TreeGrafter"/>
</dbReference>
<dbReference type="GO" id="GO:0015087">
    <property type="term" value="F:cobalt ion transmembrane transporter activity"/>
    <property type="evidence" value="ECO:0007669"/>
    <property type="project" value="TreeGrafter"/>
</dbReference>
<dbReference type="GO" id="GO:0000287">
    <property type="term" value="F:magnesium ion binding"/>
    <property type="evidence" value="ECO:0007669"/>
    <property type="project" value="TreeGrafter"/>
</dbReference>
<dbReference type="GO" id="GO:0015095">
    <property type="term" value="F:magnesium ion transmembrane transporter activity"/>
    <property type="evidence" value="ECO:0007669"/>
    <property type="project" value="TreeGrafter"/>
</dbReference>
<dbReference type="GO" id="GO:0005385">
    <property type="term" value="F:zinc ion transmembrane transporter activity"/>
    <property type="evidence" value="ECO:0007669"/>
    <property type="project" value="UniProtKB-UniRule"/>
</dbReference>
<dbReference type="CDD" id="cd12833">
    <property type="entry name" value="ZntB-like_1"/>
    <property type="match status" value="1"/>
</dbReference>
<dbReference type="Gene3D" id="3.30.460.20">
    <property type="entry name" value="CorA soluble domain-like"/>
    <property type="match status" value="1"/>
</dbReference>
<dbReference type="Gene3D" id="1.20.58.340">
    <property type="entry name" value="Magnesium transport protein CorA, transmembrane region"/>
    <property type="match status" value="2"/>
</dbReference>
<dbReference type="HAMAP" id="MF_01565">
    <property type="entry name" value="ZntB"/>
    <property type="match status" value="1"/>
</dbReference>
<dbReference type="InterPro" id="IPR045861">
    <property type="entry name" value="CorA_cytoplasmic_dom"/>
</dbReference>
<dbReference type="InterPro" id="IPR045863">
    <property type="entry name" value="CorA_TM1_TM2"/>
</dbReference>
<dbReference type="InterPro" id="IPR002523">
    <property type="entry name" value="MgTranspt_CorA/ZnTranspt_ZntB"/>
</dbReference>
<dbReference type="InterPro" id="IPR023714">
    <property type="entry name" value="Zn_transp_ZntB"/>
</dbReference>
<dbReference type="NCBIfam" id="NF007092">
    <property type="entry name" value="PRK09546.1"/>
    <property type="match status" value="1"/>
</dbReference>
<dbReference type="PANTHER" id="PTHR46494">
    <property type="entry name" value="CORA FAMILY METAL ION TRANSPORTER (EUROFUNG)"/>
    <property type="match status" value="1"/>
</dbReference>
<dbReference type="PANTHER" id="PTHR46494:SF3">
    <property type="entry name" value="ZINC TRANSPORT PROTEIN ZNTB"/>
    <property type="match status" value="1"/>
</dbReference>
<dbReference type="Pfam" id="PF01544">
    <property type="entry name" value="CorA"/>
    <property type="match status" value="1"/>
</dbReference>
<dbReference type="SUPFAM" id="SSF143865">
    <property type="entry name" value="CorA soluble domain-like"/>
    <property type="match status" value="1"/>
</dbReference>
<dbReference type="SUPFAM" id="SSF144083">
    <property type="entry name" value="Magnesium transport protein CorA, transmembrane region"/>
    <property type="match status" value="1"/>
</dbReference>
<organism>
    <name type="scientific">Cronobacter sakazakii (strain ATCC BAA-894)</name>
    <name type="common">Enterobacter sakazakii</name>
    <dbReference type="NCBI Taxonomy" id="290339"/>
    <lineage>
        <taxon>Bacteria</taxon>
        <taxon>Pseudomonadati</taxon>
        <taxon>Pseudomonadota</taxon>
        <taxon>Gammaproteobacteria</taxon>
        <taxon>Enterobacterales</taxon>
        <taxon>Enterobacteriaceae</taxon>
        <taxon>Cronobacter</taxon>
    </lineage>
</organism>
<name>ZNTB_CROS8</name>
<protein>
    <recommendedName>
        <fullName evidence="1">Zinc transport protein ZntB</fullName>
    </recommendedName>
</protein>
<sequence>MEAIKGSEVNVPDAVIAWLLDGHGGVKPLQDDAVIDKDHPCWLHLNYANPESAQWLTETPLLPNLVRDALAGESLRPRVTRMGDGTLITLRCINGSTDERPDQLVAMRLYIDERLIVSTRQRKVLALDDIIHDLNEGSGPADVGGWLVDACDALTDHASEFIEELHDKIIDLEDNLLEEIVPPRGVLALLRKQLIVMRRYMSPQRDVFSRLASERFSWMTDDHRRRMQDIADRLGRGLDEIDACIARTAVMADEISQTMQESLSRRSYTMSLMAMVFLPSTFLTGLFGVNLGGIPGGGWHLGFSVFCVALVLLIGGVTWWLHRSKWL</sequence>
<keyword id="KW-0997">Cell inner membrane</keyword>
<keyword id="KW-1003">Cell membrane</keyword>
<keyword id="KW-0406">Ion transport</keyword>
<keyword id="KW-0472">Membrane</keyword>
<keyword id="KW-1185">Reference proteome</keyword>
<keyword id="KW-0812">Transmembrane</keyword>
<keyword id="KW-1133">Transmembrane helix</keyword>
<keyword id="KW-0813">Transport</keyword>
<keyword id="KW-0862">Zinc</keyword>
<accession>A7MLI3</accession>
<feature type="chain" id="PRO_1000069074" description="Zinc transport protein ZntB">
    <location>
        <begin position="1"/>
        <end position="327"/>
    </location>
</feature>
<feature type="topological domain" description="Cytoplasmic" evidence="1">
    <location>
        <begin position="1"/>
        <end position="273"/>
    </location>
</feature>
<feature type="transmembrane region" description="Helical" evidence="1">
    <location>
        <begin position="274"/>
        <end position="294"/>
    </location>
</feature>
<feature type="topological domain" description="Periplasmic" evidence="1">
    <location>
        <begin position="295"/>
        <end position="300"/>
    </location>
</feature>
<feature type="transmembrane region" description="Helical" evidence="1">
    <location>
        <begin position="301"/>
        <end position="321"/>
    </location>
</feature>
<feature type="topological domain" description="Cytoplasmic" evidence="1">
    <location>
        <begin position="322"/>
        <end position="327"/>
    </location>
</feature>
<comment type="function">
    <text evidence="1">Zinc transporter. Acts as a Zn(2+):proton symporter, which likely mediates zinc ion uptake.</text>
</comment>
<comment type="catalytic activity">
    <reaction evidence="1">
        <text>Zn(2+)(out) + H(+)(out) = Zn(2+)(in) + H(+)(in)</text>
        <dbReference type="Rhea" id="RHEA:71195"/>
        <dbReference type="ChEBI" id="CHEBI:15378"/>
        <dbReference type="ChEBI" id="CHEBI:29105"/>
    </reaction>
    <physiologicalReaction direction="left-to-right" evidence="1">
        <dbReference type="Rhea" id="RHEA:71196"/>
    </physiologicalReaction>
</comment>
<comment type="subcellular location">
    <subcellularLocation>
        <location evidence="1">Cell inner membrane</location>
        <topology evidence="1">Multi-pass membrane protein</topology>
    </subcellularLocation>
</comment>
<comment type="similarity">
    <text evidence="1">Belongs to the CorA metal ion transporter (MIT) (TC 1.A.35) family.</text>
</comment>